<evidence type="ECO:0000255" key="1"/>
<evidence type="ECO:0000255" key="2">
    <source>
        <dbReference type="PROSITE-ProRule" id="PRU01348"/>
    </source>
</evidence>
<evidence type="ECO:0000255" key="3">
    <source>
        <dbReference type="PROSITE-ProRule" id="PRU01363"/>
    </source>
</evidence>
<evidence type="ECO:0000255" key="4">
    <source>
        <dbReference type="PROSITE-ProRule" id="PRU10022"/>
    </source>
</evidence>
<evidence type="ECO:0000256" key="5">
    <source>
        <dbReference type="SAM" id="MobiDB-lite"/>
    </source>
</evidence>
<evidence type="ECO:0000269" key="6">
    <source>
    </source>
</evidence>
<evidence type="ECO:0000269" key="7">
    <source>
    </source>
</evidence>
<evidence type="ECO:0000269" key="8">
    <source>
    </source>
</evidence>
<evidence type="ECO:0000303" key="9">
    <source>
    </source>
</evidence>
<evidence type="ECO:0000303" key="10">
    <source>
    </source>
</evidence>
<evidence type="ECO:0000303" key="11">
    <source>
    </source>
</evidence>
<evidence type="ECO:0000305" key="12">
    <source>
    </source>
</evidence>
<keyword id="KW-0012">Acyltransferase</keyword>
<keyword id="KW-0489">Methyltransferase</keyword>
<keyword id="KW-0511">Multifunctional enzyme</keyword>
<keyword id="KW-0521">NADP</keyword>
<keyword id="KW-0560">Oxidoreductase</keyword>
<keyword id="KW-0596">Phosphopantetheine</keyword>
<keyword id="KW-0597">Phosphoprotein</keyword>
<keyword id="KW-0949">S-adenosyl-L-methionine</keyword>
<keyword id="KW-0808">Transferase</keyword>
<name>SPKS1_STRTC</name>
<sequence>MSPTAEIPKPVAVVGISAEFPSGTLSDANFDHQSFFDFLLSGKDAVERIPKDRFNIDGWQGSHLGQILPEDACFLKNVHLFDHFEFGISSKDALTMGAGTRKLVEHSFLALLDSGINCRSQNVAAFSSAVAFDLLSAADADEFEPRDGFGGGAAAVANRISYQLDLLGPSIPVDTACSSSLMALHLGVQSLRAGECEAAVIGGSQINHRFLDWIFYSQLSILSPGGKSIPFDSSADGFGRGEAVVVLVVKLLEDAIRDGDKIYATVLNTAVNSTGSAGPVKTPIAESQAAAMLTAYKGIGRSPSEADFIECHATGTSVGDPVEANWVGNHFKRDSELLIGSVKGNVGHTEITSFLTSFSKVISMFDTNRIPPQANFKEPNPAIHWEEYNMRTPTQIEGFTTRNPSGKRLASINASGLLGANGHVIAESPPPKAAKPSALPTGMPVLLMAAGLSPRSTTAIAADLSKLASEIPDELPILSNIFGRRARQLTWRAAAISTSDGPFVFPAPRFVPRGTPQLVFVFSGQGPQHIEMGRQLFKYYPVFRDSILKMDKVHVELTGKSIVKDLGFFGETRSSTALPDVWPVGLTVPSIAMIQMALVDLLAAFGIRPNLVFGHSAGEAAMSYTSGALPQELAMEIAVRRSQAMSIVEGSGGMAAVSCAPSVAREIVQEVLDEAGPDSGVLEIGCFNAPEAFTISGTHALLDKAVAIASGRGLFARKIKARVPGHCTLMEPCKERYVEQMEVAFSRYPGAHVPVVPTFSTQTGARWESEFTPEYMWNNGRVPVQFEQTVTAVVQEMPEAIFVEIGPHPALSSYISGMGAKPDKVVCPMRRVKNVTGFNEIFELLTAVGNLSTLGVNTINFHAVNATDCLEISKPIPAYPFAPKTMPFYSESSELAVKMKRSRKGPLNYDTLAVNALTHPDLAEHVIKGEPILPATGFFEMIFEEGARTIWDIELRSLLPLLPEKVLNVNVKSDGHAWSIVSSSGGRNPRLHATGFMTTEVMDKDAGPIDLAAIRARTTPADISNLYAILNNTAAFGPLYRRIEACYEGDHEILYQVRGNAPELTAHYNYVFHPSLLDSCIHGLLHPVFTGNADKSVFYLPSHIGRVTLYDRAIEEAVPETLYSYVVPHDWTPDSIACDAFIVNERGERLVTLIDCVLSKHWTGAVPTRPDTSYEYIYQPLGLPAAELVKSEAQQQDYAFLDAIVAHADEKVAPPSANGHANGHANGSANGSAVGTVGEDRKVFEEIVQSIASDELELKASSILGLFSASLDAPVAAVRQILDHAAKSGKQVVRILDIGDATASLYKQINAFASEYPSLRVDYTACGHEHATLDLRLASYNVDNVSKQAGLSPSTYDVIIETHTLGFAAELDRSLEYLHGLLLPGGFLVALEANGSAQASGGKWIDQVFSPQGRWSGLRSGKQHHRLSQSEWSGQLQKAKFQVVDGAQDAENTLFLTLLAQKHSLSTVSASSAASSAKVEEPAVFSFDHSRVLDLQKTVLASMSSGASNTKLWIESTTGTFDGAVATGFARSLMRELVAVDVRLVLFDPAWKAESRIPAIRQLSTLPSLESEIVLDASGVVMVPRLRSYAPRAPDSLDTTKYWVVDETKTVVQPAQPLPGPHQVLVKISSLSEAEGGLRGIVGTVARSGSSQWPVGAHVVTVAPSALSNFTLVHEGQLAQAPQTADEHSTAKVALLLVFAALGLRLDSRPLQSLQQIKVVVIHTGTVASSLARLLEYLGVKPVLVAPSLPLLLPRLSPGDVIIGGLSAAFARTVPRINGVSVFNWEDPEQGALAAVAQNPWLVGTTVDAHLARALPQVSVEGSSLTPDQLLPSDFSVSQSLALADDKTYLVLGGIGSLGLQIAIWMYQKGARHIVLTSRTGVSRLAGTKNRSLRGAVEYLKTLPDLELRLEPCDASSEESLSKLISSLDRPLAGAMLTAAVMADGLFLKQSADTYPIPFKPKTDAYFAFEKVVDIKKLDFLLAVSSVAGFGAAGQTNYASANTGIEYLTARYPNAWSFVAPGIADSNVGFDLFTSTNSHLEQWESSTMNSYEICLCLEDGLLRMANNERISIYVPNLNWDAISQSVSESVLYNHLVKLDAATDELEVEDPYEVLQEIVLKFVDASEEEFERNVPLTSYGLDSLSAARMSTALKPYLAITQIQLLGDLSLDDLVEKMQATKHVAVEETAVSTAEKPFAWDAMHQPGQTILKFNIGSGTPLIILHGGAGDTAAFRAIQEQFSTPLWAIQPTPEAPLDTVDTLAQFYFEKIKEARPAGPYRIAGFSASSMVTLRLAQLLEANEDEIAQLTFVDHFPLFFTSAIHGFTEDHKTFEDLTAYGRKASVALVAECCRRDTATARRLYGENLVAASNGQPSATNAMESWEWIQKTTRMNLKQVVDFGGGWEAWASSDATTRMEAARRRMVEEIAKVKAPMNVMIANWGIRALINSEWTDLGISRGGREVRTQYYDAGHFDIFEKPDFSRNLEFDWVDPHPVHQLATMIHNPAMNDLRALFKILDTKALQVMADTISQNPVVGSEISRQRLFEVCKEFVRTQKHSTWTDEEYEHSKALFPTYFETTERISKVHPSIMESPAAAVGALYSDDMIDGFYRQNKVFTSMNQEAAKTFKALVSSPDFGKQRPIRVLEVGAGVGGLTKFLVEALCDMPNADVEYTVTDLSYTLASSLAESFSYKNMVAKMYDLSKKPSEQGLQLGHYDVITGLNVIHAVPDLNATLTDLHSLLAPGGRILIVDTDGTARTSNPPRPGAIWNDFIWGSFQGWFGYTDDRTHCTIDEDEWRKRLTATGYSNVQVCHEDAGTCILFEAEKV</sequence>
<proteinExistence type="evidence at protein level"/>
<protein>
    <recommendedName>
        <fullName evidence="11">Highly reducing polyketide synthase stpks1</fullName>
        <ecNumber evidence="6">2.3.1.-</ecNumber>
    </recommendedName>
    <alternativeName>
        <fullName evidence="11">Strobilurin A biosynthesis cluster protein pks1</fullName>
    </alternativeName>
</protein>
<gene>
    <name evidence="11" type="primary">stpks1</name>
</gene>
<organism>
    <name type="scientific">Strobilurus tenacellus</name>
    <dbReference type="NCBI Taxonomy" id="41251"/>
    <lineage>
        <taxon>Eukaryota</taxon>
        <taxon>Fungi</taxon>
        <taxon>Dikarya</taxon>
        <taxon>Basidiomycota</taxon>
        <taxon>Agaricomycotina</taxon>
        <taxon>Agaricomycetes</taxon>
        <taxon>Agaricomycetidae</taxon>
        <taxon>Agaricales</taxon>
        <taxon>Marasmiineae</taxon>
        <taxon>Physalacriaceae</taxon>
        <taxon>Strobilurus</taxon>
    </lineage>
</organism>
<dbReference type="EC" id="2.3.1.-" evidence="6"/>
<dbReference type="EMBL" id="KY070339">
    <property type="protein sequence ID" value="ATV82110.1"/>
    <property type="molecule type" value="Genomic_DNA"/>
</dbReference>
<dbReference type="SMR" id="A0A384XH94"/>
<dbReference type="GO" id="GO:0004315">
    <property type="term" value="F:3-oxoacyl-[acyl-carrier-protein] synthase activity"/>
    <property type="evidence" value="ECO:0007669"/>
    <property type="project" value="InterPro"/>
</dbReference>
<dbReference type="GO" id="GO:0008168">
    <property type="term" value="F:methyltransferase activity"/>
    <property type="evidence" value="ECO:0007669"/>
    <property type="project" value="UniProtKB-KW"/>
</dbReference>
<dbReference type="GO" id="GO:0016491">
    <property type="term" value="F:oxidoreductase activity"/>
    <property type="evidence" value="ECO:0007669"/>
    <property type="project" value="UniProtKB-KW"/>
</dbReference>
<dbReference type="GO" id="GO:0004435">
    <property type="term" value="F:phosphatidylinositol-4,5-bisphosphate phospholipase C activity"/>
    <property type="evidence" value="ECO:0007669"/>
    <property type="project" value="InterPro"/>
</dbReference>
<dbReference type="GO" id="GO:0006633">
    <property type="term" value="P:fatty acid biosynthetic process"/>
    <property type="evidence" value="ECO:0007669"/>
    <property type="project" value="InterPro"/>
</dbReference>
<dbReference type="GO" id="GO:0035556">
    <property type="term" value="P:intracellular signal transduction"/>
    <property type="evidence" value="ECO:0007669"/>
    <property type="project" value="InterPro"/>
</dbReference>
<dbReference type="GO" id="GO:0032259">
    <property type="term" value="P:methylation"/>
    <property type="evidence" value="ECO:0007669"/>
    <property type="project" value="UniProtKB-KW"/>
</dbReference>
<dbReference type="GO" id="GO:0046189">
    <property type="term" value="P:phenol-containing compound biosynthetic process"/>
    <property type="evidence" value="ECO:0007669"/>
    <property type="project" value="UniProtKB-ARBA"/>
</dbReference>
<dbReference type="GO" id="GO:0030639">
    <property type="term" value="P:polyketide biosynthetic process"/>
    <property type="evidence" value="ECO:0007669"/>
    <property type="project" value="UniProtKB-ARBA"/>
</dbReference>
<dbReference type="GO" id="GO:0009403">
    <property type="term" value="P:toxin biosynthetic process"/>
    <property type="evidence" value="ECO:0007669"/>
    <property type="project" value="UniProtKB-ARBA"/>
</dbReference>
<dbReference type="CDD" id="cd02440">
    <property type="entry name" value="AdoMet_MTases"/>
    <property type="match status" value="1"/>
</dbReference>
<dbReference type="CDD" id="cd00833">
    <property type="entry name" value="PKS"/>
    <property type="match status" value="1"/>
</dbReference>
<dbReference type="Gene3D" id="3.40.47.10">
    <property type="match status" value="1"/>
</dbReference>
<dbReference type="Gene3D" id="3.40.50.1820">
    <property type="entry name" value="alpha/beta hydrolase"/>
    <property type="match status" value="1"/>
</dbReference>
<dbReference type="Gene3D" id="3.40.366.10">
    <property type="entry name" value="Malonyl-Coenzyme A Acyl Carrier Protein, domain 2"/>
    <property type="match status" value="1"/>
</dbReference>
<dbReference type="Gene3D" id="3.40.50.720">
    <property type="entry name" value="NAD(P)-binding Rossmann-like Domain"/>
    <property type="match status" value="1"/>
</dbReference>
<dbReference type="Gene3D" id="3.10.129.110">
    <property type="entry name" value="Polyketide synthase dehydratase"/>
    <property type="match status" value="1"/>
</dbReference>
<dbReference type="Gene3D" id="3.40.50.150">
    <property type="entry name" value="Vaccinia Virus protein VP39"/>
    <property type="match status" value="2"/>
</dbReference>
<dbReference type="InterPro" id="IPR029058">
    <property type="entry name" value="AB_hydrolase_fold"/>
</dbReference>
<dbReference type="InterPro" id="IPR001227">
    <property type="entry name" value="Ac_transferase_dom_sf"/>
</dbReference>
<dbReference type="InterPro" id="IPR014043">
    <property type="entry name" value="Acyl_transferase_dom"/>
</dbReference>
<dbReference type="InterPro" id="IPR016035">
    <property type="entry name" value="Acyl_Trfase/lysoPLipase"/>
</dbReference>
<dbReference type="InterPro" id="IPR011032">
    <property type="entry name" value="GroES-like_sf"/>
</dbReference>
<dbReference type="InterPro" id="IPR018201">
    <property type="entry name" value="Ketoacyl_synth_AS"/>
</dbReference>
<dbReference type="InterPro" id="IPR014031">
    <property type="entry name" value="Ketoacyl_synth_C"/>
</dbReference>
<dbReference type="InterPro" id="IPR014030">
    <property type="entry name" value="Ketoacyl_synth_N"/>
</dbReference>
<dbReference type="InterPro" id="IPR016036">
    <property type="entry name" value="Malonyl_transacylase_ACP-bd"/>
</dbReference>
<dbReference type="InterPro" id="IPR036291">
    <property type="entry name" value="NAD(P)-bd_dom_sf"/>
</dbReference>
<dbReference type="InterPro" id="IPR032821">
    <property type="entry name" value="PKS_assoc"/>
</dbReference>
<dbReference type="InterPro" id="IPR020841">
    <property type="entry name" value="PKS_Beta-ketoAc_synthase_dom"/>
</dbReference>
<dbReference type="InterPro" id="IPR042104">
    <property type="entry name" value="PKS_dehydratase_sf"/>
</dbReference>
<dbReference type="InterPro" id="IPR020807">
    <property type="entry name" value="PKS_DH"/>
</dbReference>
<dbReference type="InterPro" id="IPR049551">
    <property type="entry name" value="PKS_DH_C"/>
</dbReference>
<dbReference type="InterPro" id="IPR013968">
    <property type="entry name" value="PKS_KR"/>
</dbReference>
<dbReference type="InterPro" id="IPR049900">
    <property type="entry name" value="PKS_mFAS_DH"/>
</dbReference>
<dbReference type="InterPro" id="IPR001711">
    <property type="entry name" value="PLipase_C_Pinositol-sp_Y"/>
</dbReference>
<dbReference type="InterPro" id="IPR050444">
    <property type="entry name" value="Polyketide_Synthase"/>
</dbReference>
<dbReference type="InterPro" id="IPR006162">
    <property type="entry name" value="Ppantetheine_attach_site"/>
</dbReference>
<dbReference type="InterPro" id="IPR029063">
    <property type="entry name" value="SAM-dependent_MTases_sf"/>
</dbReference>
<dbReference type="InterPro" id="IPR001031">
    <property type="entry name" value="Thioesterase"/>
</dbReference>
<dbReference type="InterPro" id="IPR016039">
    <property type="entry name" value="Thiolase-like"/>
</dbReference>
<dbReference type="PANTHER" id="PTHR45681:SF6">
    <property type="entry name" value="POLYKETIDE SYNTHASE 37"/>
    <property type="match status" value="1"/>
</dbReference>
<dbReference type="PANTHER" id="PTHR45681">
    <property type="entry name" value="POLYKETIDE SYNTHASE 44-RELATED"/>
    <property type="match status" value="1"/>
</dbReference>
<dbReference type="Pfam" id="PF00698">
    <property type="entry name" value="Acyl_transf_1"/>
    <property type="match status" value="1"/>
</dbReference>
<dbReference type="Pfam" id="PF16197">
    <property type="entry name" value="KAsynt_C_assoc"/>
    <property type="match status" value="1"/>
</dbReference>
<dbReference type="Pfam" id="PF00109">
    <property type="entry name" value="ketoacyl-synt"/>
    <property type="match status" value="1"/>
</dbReference>
<dbReference type="Pfam" id="PF02801">
    <property type="entry name" value="Ketoacyl-synt_C"/>
    <property type="match status" value="1"/>
</dbReference>
<dbReference type="Pfam" id="PF08659">
    <property type="entry name" value="KR"/>
    <property type="match status" value="1"/>
</dbReference>
<dbReference type="Pfam" id="PF13489">
    <property type="entry name" value="Methyltransf_23"/>
    <property type="match status" value="1"/>
</dbReference>
<dbReference type="Pfam" id="PF14765">
    <property type="entry name" value="PS-DH"/>
    <property type="match status" value="1"/>
</dbReference>
<dbReference type="Pfam" id="PF00975">
    <property type="entry name" value="Thioesterase"/>
    <property type="match status" value="1"/>
</dbReference>
<dbReference type="SMART" id="SM00827">
    <property type="entry name" value="PKS_AT"/>
    <property type="match status" value="1"/>
</dbReference>
<dbReference type="SMART" id="SM00826">
    <property type="entry name" value="PKS_DH"/>
    <property type="match status" value="1"/>
</dbReference>
<dbReference type="SMART" id="SM00822">
    <property type="entry name" value="PKS_KR"/>
    <property type="match status" value="1"/>
</dbReference>
<dbReference type="SMART" id="SM00825">
    <property type="entry name" value="PKS_KS"/>
    <property type="match status" value="1"/>
</dbReference>
<dbReference type="SUPFAM" id="SSF53474">
    <property type="entry name" value="alpha/beta-Hydrolases"/>
    <property type="match status" value="1"/>
</dbReference>
<dbReference type="SUPFAM" id="SSF52151">
    <property type="entry name" value="FabD/lysophospholipase-like"/>
    <property type="match status" value="1"/>
</dbReference>
<dbReference type="SUPFAM" id="SSF50129">
    <property type="entry name" value="GroES-like"/>
    <property type="match status" value="1"/>
</dbReference>
<dbReference type="SUPFAM" id="SSF51735">
    <property type="entry name" value="NAD(P)-binding Rossmann-fold domains"/>
    <property type="match status" value="1"/>
</dbReference>
<dbReference type="SUPFAM" id="SSF55048">
    <property type="entry name" value="Probable ACP-binding domain of malonyl-CoA ACP transacylase"/>
    <property type="match status" value="1"/>
</dbReference>
<dbReference type="SUPFAM" id="SSF53335">
    <property type="entry name" value="S-adenosyl-L-methionine-dependent methyltransferases"/>
    <property type="match status" value="2"/>
</dbReference>
<dbReference type="SUPFAM" id="SSF53901">
    <property type="entry name" value="Thiolase-like"/>
    <property type="match status" value="1"/>
</dbReference>
<dbReference type="PROSITE" id="PS00606">
    <property type="entry name" value="KS3_1"/>
    <property type="match status" value="1"/>
</dbReference>
<dbReference type="PROSITE" id="PS52004">
    <property type="entry name" value="KS3_2"/>
    <property type="match status" value="1"/>
</dbReference>
<dbReference type="PROSITE" id="PS00012">
    <property type="entry name" value="PHOSPHOPANTETHEINE"/>
    <property type="match status" value="1"/>
</dbReference>
<dbReference type="PROSITE" id="PS52019">
    <property type="entry name" value="PKS_MFAS_DH"/>
    <property type="match status" value="1"/>
</dbReference>
<comment type="function">
    <text evidence="6 12">Highly reducing polyketide synthase; part of the gene cluster that mediates the biosynthesis of strobilurin A, an antifungal polyketide that contains a key beta-methoxyacrylate toxophore that targets the complex III of the mitochondrial electron transport chain (PubMed:30258052). Strobilurin biosynthesis begins with construction of benzoyl CoA by step-wise elimination of ammonia from phenylalanine by the phenylalanine ammonia-lyase str11, oxygenation by str8 and retro-Claisen reaction to form benzoic acid, which is activated to its CoA thiolester benzoyl CoA by the dedicated CoA ligase str10 (PubMed:30258052). Benzoyl CoA forms the starter unit for the highly reducing polyketide synthase stpks1 that produces the polyketide prestrobilutin A (PubMed:30258052). The FAD-dependent oxygenase str9 then catalyzes the key oxidative rearrangement responsible for the creation of the beta-methoxyacrylate toxophore (PubMed:30258052). Str9 performs epoxidation of the 2,3 olefin of prestrobilutin A, followed by Meinwald rearrangement to furnish the aldehyde intermediate (Probable). Rapid enolization of the aldehyde intermediate would give the beta-methoxyacrylate skeleton and methylations catalyzed by str2 and str3 complete the synthesis and lead to the production of strobilurin A (Probable). The short-chain dehydrogenase stl2 and the dehydrogenase str4 play a role in the shunt pathway leading to the production of bolineol (PubMed:30258052). The cluster encodes no obvious halogenase gene that could be involved in production of strobilurin B, nor any obvious dimethylallyl-transferase that could be involved in the production of strobilurin G (Probable). It is possible that unknown proteins encoded in, or near, the cluster (such as str1 or stl1) may form new classes of halogenases or dimethylally-transferases, or that the responsible genes are located elsewhere on the genome (Probable). Similarly, proteins encoded by str5/str6 hydrolases appear to have no chemical role in the biosynthesis of strobilurin A (Probable). Finally, no obvious self-resistance gene is found within the cluster (Probable).</text>
</comment>
<comment type="pathway">
    <text evidence="6">Mycotoxin biosynthesis.</text>
</comment>
<comment type="induction">
    <text evidence="6">Induced in strobilurin-producing conditions (on CGC medium after 6 days of growth).</text>
</comment>
<comment type="domain">
    <text evidence="12">Multidomain protein; including a ketosynthase (KS) that catalyzes repeated decarboxylative condensation to elongate the polyketide backbone; a malonyl-CoA:ACP transacylase (MAT) that selects and transfers the extender unit malonyl-CoA; a dehydratase (DH) domain that reduces hydroxyl groups to enoyl groups; 2 methyltransferase (CMeT) domains responsible for the incorporation of methyl groups; an enoylreductase (ER) domain that reduces enoyl groups to alkyl group; a ketoreductase (KR) domain that catalyzes beta-ketoreduction steps; and an acyl-carrier protein (ACP) that serves as the tether of the growing and completed polyketide via its phosphopantetheinyl arm (Probable). Very unusually, the ACP is followed by a thiolesterase (TE) domain that may be responsible for release of prestrobilurin A (Probable). The CMeT domain located between the DH and KR domains is probably inactive due to mutations in the SAM-binding motif, as is the ER, which is more similar to the inactive ER domain of tenellin synthetase (TENS) (Probable). The C-terminal CMeT domain is likely to be active, as the SAM-binding site appears to be intact and probably attaches the C-4 methyl group (Probable).</text>
</comment>
<comment type="biotechnology">
    <text evidence="7 8 9 10 11">The structure of strobilurin A was used for the development of the major class of beta-methoxyacrylate agricultural fungicides since its beta-methoxyacrylate toxophore targets the Qo site of complex III of the mitochondrial electron transport chain and prevents adenosine triphosphate synthesis (PubMed:563391, PubMed:6271595). Compounds such as azoxystrobin (Syngenta) and Kresoxim methyl (BASF) are among the most widely used fungicides worldwide (PubMed:12146165, PubMed:29711574). This class of antifungals are used as effective treatments against a broad range of destructive fungal plant pathogens and make significant contributions to food security (PubMed:12146165, PubMed:29711574). The strobilurin fungicides are estimated to have been worth 3.4 billion dollars in 2015 and they make up 25% of the fungicide market and 6.7% of the total crop protection market (PubMed:30258052).</text>
</comment>
<feature type="chain" id="PRO_0000449327" description="Highly reducing polyketide synthase stpks1">
    <location>
        <begin position="1"/>
        <end position="2824"/>
    </location>
</feature>
<feature type="domain" description="Ketosynthase family 3 (KS3)" evidence="2 12">
    <location>
        <begin position="8"/>
        <end position="428"/>
    </location>
</feature>
<feature type="domain" description="PKS/mFAS DH" evidence="3">
    <location>
        <begin position="886"/>
        <end position="1168"/>
    </location>
</feature>
<feature type="domain" description="Carrier" evidence="12">
    <location>
        <begin position="2109"/>
        <end position="2196"/>
    </location>
</feature>
<feature type="region of interest" description="Malonyl-CoA:ACP transacylase (MAT) domain" evidence="1 12">
    <location>
        <begin position="517"/>
        <end position="854"/>
    </location>
</feature>
<feature type="region of interest" description="N-terminal hotdog fold" evidence="3">
    <location>
        <begin position="886"/>
        <end position="1004"/>
    </location>
</feature>
<feature type="region of interest" description="Dehydratase (DH) domain" evidence="1 12">
    <location>
        <begin position="894"/>
        <end position="1083"/>
    </location>
</feature>
<feature type="region of interest" description="C-terminal hotdog fold" evidence="3">
    <location>
        <begin position="1018"/>
        <end position="1168"/>
    </location>
</feature>
<feature type="region of interest" description="Methyltransferase (CMet) domain" evidence="1 12">
    <location>
        <begin position="1101"/>
        <end position="1449"/>
    </location>
</feature>
<feature type="region of interest" description="Disordered" evidence="5">
    <location>
        <begin position="1213"/>
        <end position="1232"/>
    </location>
</feature>
<feature type="region of interest" description="Enoyl reductase (ER) domain" evidence="1 12">
    <location>
        <begin position="1518"/>
        <end position="1840"/>
    </location>
</feature>
<feature type="region of interest" description="Ketoreductase (KR) domain" evidence="1 12">
    <location>
        <begin position="1842"/>
        <end position="2096"/>
    </location>
</feature>
<feature type="region of interest" description="Thioesterase (TE) domain" evidence="1 12">
    <location>
        <begin position="2200"/>
        <end position="2414"/>
    </location>
</feature>
<feature type="region of interest" description="Methyltransferase (CMet) domain" evidence="1 12">
    <location>
        <begin position="2608"/>
        <end position="2809"/>
    </location>
</feature>
<feature type="active site" description="For beta-ketoacyl synthase activity" evidence="2">
    <location>
        <position position="177"/>
    </location>
</feature>
<feature type="active site" description="For beta-ketoacyl synthase activity" evidence="2">
    <location>
        <position position="312"/>
    </location>
</feature>
<feature type="active site" description="For beta-ketoacyl synthase activity" evidence="2">
    <location>
        <position position="348"/>
    </location>
</feature>
<feature type="active site" description="For malonyltransferase activity" evidence="4">
    <location>
        <position position="616"/>
    </location>
</feature>
<feature type="active site" description="Proton acceptor; for dehydratase activity" evidence="3">
    <location>
        <position position="925"/>
    </location>
</feature>
<feature type="active site" description="Proton donor; for dehydratase activity" evidence="3">
    <location>
        <position position="1078"/>
    </location>
</feature>
<reference key="1">
    <citation type="journal article" date="2018" name="Nat. Commun.">
        <title>Strobilurin biosynthesis in Basidiomycete fungi.</title>
        <authorList>
            <person name="Nofiani R."/>
            <person name="de Mattos-Shipley K."/>
            <person name="Lebe K.E."/>
            <person name="Han L.C."/>
            <person name="Iqbal Z."/>
            <person name="Bailey A.M."/>
            <person name="Willis C.L."/>
            <person name="Simpson T.J."/>
            <person name="Cox R.J."/>
        </authorList>
    </citation>
    <scope>NUCLEOTIDE SEQUENCE [GENOMIC DNA]</scope>
    <scope>INDUCTION</scope>
    <scope>FUNCTION</scope>
    <scope>CATALYTIC ACTIVITY</scope>
    <scope>PATHWAY</scope>
    <scope>BIOTECHNOLOGY</scope>
    <source>
        <strain>CBS 621.79</strain>
    </source>
</reference>
<reference key="2">
    <citation type="journal article" date="1977" name="J. Antibiot.">
        <title>The strobilurins--new antifungal antibiotics from the basidiomycete Strobilurus tenacellus.</title>
        <authorList>
            <person name="Anke T."/>
            <person name="Oberwinkler F."/>
            <person name="Steglich W."/>
            <person name="Schramm G."/>
        </authorList>
    </citation>
    <scope>BIOTECHNOLOGY</scope>
</reference>
<reference key="3">
    <citation type="journal article" date="1981" name="FEBS Lett.">
        <title>Oudemansin, strobilurin A, strobilurin B and myxothiazol: new inhibitors of the bc1 segment of the respiratory chain with an E-beta-methoxyacrylate system as common structural element.</title>
        <authorList>
            <person name="Becker W.F."/>
            <person name="von Jagow G."/>
            <person name="Anke T."/>
            <person name="Steglich W."/>
        </authorList>
    </citation>
    <scope>BIOTECHNOLOGY</scope>
</reference>
<reference key="4">
    <citation type="journal article" date="1999" name="Angew. Chem. Int. Ed.">
        <title>Strobilurins: evolution of a new class of active substances.</title>
        <authorList>
            <person name="Sauter H."/>
            <person name="Steglich W."/>
            <person name="Anke T."/>
        </authorList>
    </citation>
    <scope>REVIEW ON BIOTECHNOLOGY</scope>
</reference>
<reference key="5">
    <citation type="journal article" date="2002" name="Pest Manag. Sci.">
        <title>The strobilurin fungicides.</title>
        <authorList>
            <person name="Bartlett D.W."/>
            <person name="Clough J.M."/>
            <person name="Godwin J.R."/>
            <person name="Hall A.A."/>
            <person name="Hamer M."/>
            <person name="Parr-Dobrzanski B."/>
        </authorList>
    </citation>
    <scope>REVIEW ON BIOTECHNOLOGY</scope>
</reference>
<accession>A0A384XH94</accession>